<comment type="function">
    <text evidence="1">Is required not only for elongation of protein synthesis but also for the initiation of all mRNA translation through initiator tRNA(fMet) aminoacylation.</text>
</comment>
<comment type="catalytic activity">
    <reaction evidence="1">
        <text>tRNA(Met) + L-methionine + ATP = L-methionyl-tRNA(Met) + AMP + diphosphate</text>
        <dbReference type="Rhea" id="RHEA:13481"/>
        <dbReference type="Rhea" id="RHEA-COMP:9667"/>
        <dbReference type="Rhea" id="RHEA-COMP:9698"/>
        <dbReference type="ChEBI" id="CHEBI:30616"/>
        <dbReference type="ChEBI" id="CHEBI:33019"/>
        <dbReference type="ChEBI" id="CHEBI:57844"/>
        <dbReference type="ChEBI" id="CHEBI:78442"/>
        <dbReference type="ChEBI" id="CHEBI:78530"/>
        <dbReference type="ChEBI" id="CHEBI:456215"/>
        <dbReference type="EC" id="6.1.1.10"/>
    </reaction>
</comment>
<comment type="cofactor">
    <cofactor evidence="1">
        <name>Zn(2+)</name>
        <dbReference type="ChEBI" id="CHEBI:29105"/>
    </cofactor>
    <text evidence="1">Binds 1 zinc ion per subunit.</text>
</comment>
<comment type="subunit">
    <text evidence="1">Homodimer.</text>
</comment>
<comment type="subcellular location">
    <subcellularLocation>
        <location evidence="1">Cytoplasm</location>
    </subcellularLocation>
</comment>
<comment type="similarity">
    <text evidence="1">Belongs to the class-I aminoacyl-tRNA synthetase family. MetG type 1 subfamily.</text>
</comment>
<dbReference type="EC" id="6.1.1.10" evidence="1"/>
<dbReference type="EMBL" id="AM746676">
    <property type="protein sequence ID" value="CAN98053.1"/>
    <property type="molecule type" value="Genomic_DNA"/>
</dbReference>
<dbReference type="RefSeq" id="WP_012240492.1">
    <property type="nucleotide sequence ID" value="NC_010162.1"/>
</dbReference>
<dbReference type="SMR" id="A9FBU8"/>
<dbReference type="STRING" id="448385.sce7883"/>
<dbReference type="KEGG" id="scl:sce7883"/>
<dbReference type="eggNOG" id="COG0073">
    <property type="taxonomic scope" value="Bacteria"/>
</dbReference>
<dbReference type="eggNOG" id="COG0143">
    <property type="taxonomic scope" value="Bacteria"/>
</dbReference>
<dbReference type="HOGENOM" id="CLU_009710_7_0_7"/>
<dbReference type="OrthoDB" id="9810191at2"/>
<dbReference type="BioCyc" id="SCEL448385:SCE_RS40355-MONOMER"/>
<dbReference type="Proteomes" id="UP000002139">
    <property type="component" value="Chromosome"/>
</dbReference>
<dbReference type="GO" id="GO:0005829">
    <property type="term" value="C:cytosol"/>
    <property type="evidence" value="ECO:0007669"/>
    <property type="project" value="TreeGrafter"/>
</dbReference>
<dbReference type="GO" id="GO:0005524">
    <property type="term" value="F:ATP binding"/>
    <property type="evidence" value="ECO:0007669"/>
    <property type="project" value="UniProtKB-UniRule"/>
</dbReference>
<dbReference type="GO" id="GO:0046872">
    <property type="term" value="F:metal ion binding"/>
    <property type="evidence" value="ECO:0007669"/>
    <property type="project" value="UniProtKB-KW"/>
</dbReference>
<dbReference type="GO" id="GO:0004825">
    <property type="term" value="F:methionine-tRNA ligase activity"/>
    <property type="evidence" value="ECO:0007669"/>
    <property type="project" value="UniProtKB-UniRule"/>
</dbReference>
<dbReference type="GO" id="GO:0000049">
    <property type="term" value="F:tRNA binding"/>
    <property type="evidence" value="ECO:0007669"/>
    <property type="project" value="UniProtKB-KW"/>
</dbReference>
<dbReference type="GO" id="GO:0006431">
    <property type="term" value="P:methionyl-tRNA aminoacylation"/>
    <property type="evidence" value="ECO:0007669"/>
    <property type="project" value="UniProtKB-UniRule"/>
</dbReference>
<dbReference type="CDD" id="cd07957">
    <property type="entry name" value="Anticodon_Ia_Met"/>
    <property type="match status" value="1"/>
</dbReference>
<dbReference type="CDD" id="cd00814">
    <property type="entry name" value="MetRS_core"/>
    <property type="match status" value="1"/>
</dbReference>
<dbReference type="CDD" id="cd02800">
    <property type="entry name" value="tRNA_bind_EcMetRS_like"/>
    <property type="match status" value="1"/>
</dbReference>
<dbReference type="FunFam" id="2.20.28.20:FF:000001">
    <property type="entry name" value="Methionine--tRNA ligase"/>
    <property type="match status" value="1"/>
</dbReference>
<dbReference type="FunFam" id="2.40.50.140:FF:000042">
    <property type="entry name" value="Methionine--tRNA ligase"/>
    <property type="match status" value="1"/>
</dbReference>
<dbReference type="Gene3D" id="3.40.50.620">
    <property type="entry name" value="HUPs"/>
    <property type="match status" value="1"/>
</dbReference>
<dbReference type="Gene3D" id="1.10.730.10">
    <property type="entry name" value="Isoleucyl-tRNA Synthetase, Domain 1"/>
    <property type="match status" value="1"/>
</dbReference>
<dbReference type="Gene3D" id="2.20.28.20">
    <property type="entry name" value="Methionyl-tRNA synthetase, Zn-domain"/>
    <property type="match status" value="1"/>
</dbReference>
<dbReference type="Gene3D" id="2.40.50.140">
    <property type="entry name" value="Nucleic acid-binding proteins"/>
    <property type="match status" value="1"/>
</dbReference>
<dbReference type="HAMAP" id="MF_00098">
    <property type="entry name" value="Met_tRNA_synth_type1"/>
    <property type="match status" value="1"/>
</dbReference>
<dbReference type="InterPro" id="IPR001412">
    <property type="entry name" value="aa-tRNA-synth_I_CS"/>
</dbReference>
<dbReference type="InterPro" id="IPR041872">
    <property type="entry name" value="Anticodon_Met"/>
</dbReference>
<dbReference type="InterPro" id="IPR004495">
    <property type="entry name" value="Met-tRNA-synth_bsu_C"/>
</dbReference>
<dbReference type="InterPro" id="IPR023458">
    <property type="entry name" value="Met-tRNA_ligase_1"/>
</dbReference>
<dbReference type="InterPro" id="IPR014758">
    <property type="entry name" value="Met-tRNA_synth"/>
</dbReference>
<dbReference type="InterPro" id="IPR015413">
    <property type="entry name" value="Methionyl/Leucyl_tRNA_Synth"/>
</dbReference>
<dbReference type="InterPro" id="IPR033911">
    <property type="entry name" value="MetRS_core"/>
</dbReference>
<dbReference type="InterPro" id="IPR029038">
    <property type="entry name" value="MetRS_Zn"/>
</dbReference>
<dbReference type="InterPro" id="IPR012340">
    <property type="entry name" value="NA-bd_OB-fold"/>
</dbReference>
<dbReference type="InterPro" id="IPR014729">
    <property type="entry name" value="Rossmann-like_a/b/a_fold"/>
</dbReference>
<dbReference type="InterPro" id="IPR002547">
    <property type="entry name" value="tRNA-bd_dom"/>
</dbReference>
<dbReference type="InterPro" id="IPR009080">
    <property type="entry name" value="tRNAsynth_Ia_anticodon-bd"/>
</dbReference>
<dbReference type="NCBIfam" id="TIGR00398">
    <property type="entry name" value="metG"/>
    <property type="match status" value="1"/>
</dbReference>
<dbReference type="NCBIfam" id="TIGR00399">
    <property type="entry name" value="metG_C_term"/>
    <property type="match status" value="1"/>
</dbReference>
<dbReference type="NCBIfam" id="NF001100">
    <property type="entry name" value="PRK00133.1"/>
    <property type="match status" value="1"/>
</dbReference>
<dbReference type="PANTHER" id="PTHR45765">
    <property type="entry name" value="METHIONINE--TRNA LIGASE"/>
    <property type="match status" value="1"/>
</dbReference>
<dbReference type="PANTHER" id="PTHR45765:SF1">
    <property type="entry name" value="METHIONINE--TRNA LIGASE, CYTOPLASMIC"/>
    <property type="match status" value="1"/>
</dbReference>
<dbReference type="Pfam" id="PF19303">
    <property type="entry name" value="Anticodon_3"/>
    <property type="match status" value="1"/>
</dbReference>
<dbReference type="Pfam" id="PF09334">
    <property type="entry name" value="tRNA-synt_1g"/>
    <property type="match status" value="1"/>
</dbReference>
<dbReference type="Pfam" id="PF01588">
    <property type="entry name" value="tRNA_bind"/>
    <property type="match status" value="1"/>
</dbReference>
<dbReference type="PRINTS" id="PR01041">
    <property type="entry name" value="TRNASYNTHMET"/>
</dbReference>
<dbReference type="SUPFAM" id="SSF47323">
    <property type="entry name" value="Anticodon-binding domain of a subclass of class I aminoacyl-tRNA synthetases"/>
    <property type="match status" value="1"/>
</dbReference>
<dbReference type="SUPFAM" id="SSF57770">
    <property type="entry name" value="Methionyl-tRNA synthetase (MetRS), Zn-domain"/>
    <property type="match status" value="1"/>
</dbReference>
<dbReference type="SUPFAM" id="SSF50249">
    <property type="entry name" value="Nucleic acid-binding proteins"/>
    <property type="match status" value="1"/>
</dbReference>
<dbReference type="SUPFAM" id="SSF52374">
    <property type="entry name" value="Nucleotidylyl transferase"/>
    <property type="match status" value="1"/>
</dbReference>
<dbReference type="PROSITE" id="PS00178">
    <property type="entry name" value="AA_TRNA_LIGASE_I"/>
    <property type="match status" value="1"/>
</dbReference>
<dbReference type="PROSITE" id="PS50886">
    <property type="entry name" value="TRBD"/>
    <property type="match status" value="1"/>
</dbReference>
<accession>A9FBU8</accession>
<organism>
    <name type="scientific">Sorangium cellulosum (strain So ce56)</name>
    <name type="common">Polyangium cellulosum (strain So ce56)</name>
    <dbReference type="NCBI Taxonomy" id="448385"/>
    <lineage>
        <taxon>Bacteria</taxon>
        <taxon>Pseudomonadati</taxon>
        <taxon>Myxococcota</taxon>
        <taxon>Polyangia</taxon>
        <taxon>Polyangiales</taxon>
        <taxon>Polyangiaceae</taxon>
        <taxon>Sorangium</taxon>
    </lineage>
</organism>
<protein>
    <recommendedName>
        <fullName evidence="1">Methionine--tRNA ligase 1</fullName>
        <ecNumber evidence="1">6.1.1.10</ecNumber>
    </recommendedName>
    <alternativeName>
        <fullName evidence="1">Methionyl-tRNA synthetase 1</fullName>
        <shortName evidence="1">MetRS 1</shortName>
    </alternativeName>
</protein>
<name>SYM1_SORC5</name>
<proteinExistence type="inferred from homology"/>
<feature type="chain" id="PRO_0000331919" description="Methionine--tRNA ligase 1">
    <location>
        <begin position="1"/>
        <end position="690"/>
    </location>
</feature>
<feature type="domain" description="tRNA-binding" evidence="1">
    <location>
        <begin position="590"/>
        <end position="690"/>
    </location>
</feature>
<feature type="short sequence motif" description="'HIGH' region">
    <location>
        <begin position="11"/>
        <end position="21"/>
    </location>
</feature>
<feature type="short sequence motif" description="'KMSKS' region">
    <location>
        <begin position="328"/>
        <end position="332"/>
    </location>
</feature>
<feature type="binding site" evidence="1">
    <location>
        <position position="142"/>
    </location>
    <ligand>
        <name>Zn(2+)</name>
        <dbReference type="ChEBI" id="CHEBI:29105"/>
    </ligand>
</feature>
<feature type="binding site" evidence="1">
    <location>
        <position position="145"/>
    </location>
    <ligand>
        <name>Zn(2+)</name>
        <dbReference type="ChEBI" id="CHEBI:29105"/>
    </ligand>
</feature>
<feature type="binding site" evidence="1">
    <location>
        <position position="155"/>
    </location>
    <ligand>
        <name>Zn(2+)</name>
        <dbReference type="ChEBI" id="CHEBI:29105"/>
    </ligand>
</feature>
<feature type="binding site" evidence="1">
    <location>
        <position position="158"/>
    </location>
    <ligand>
        <name>Zn(2+)</name>
        <dbReference type="ChEBI" id="CHEBI:29105"/>
    </ligand>
</feature>
<feature type="binding site" evidence="1">
    <location>
        <position position="331"/>
    </location>
    <ligand>
        <name>ATP</name>
        <dbReference type="ChEBI" id="CHEBI:30616"/>
    </ligand>
</feature>
<evidence type="ECO:0000255" key="1">
    <source>
        <dbReference type="HAMAP-Rule" id="MF_00098"/>
    </source>
</evidence>
<sequence length="690" mass="75767">MKRLLLTSALPYANGHIHIGHLVEYTQTDIFARYWRMTGRRCISLCADDTHGTAIMIRARQEGRSEADVIADMSAAHQRDFAAFQIRFDHYGSTNSPANRALCEEIWASLRERGMVTTKEVTQLFDPQEGMFLADRFVKGTCPKCAAPDQYGDSCDRCGSTYAATDLVEPRSALTGARPEVRSAQHLMVAIEPERPFLSTWTQGEGRMPKEIANYLAGHFLSEPLRDWDVSRPAPYFGFEIPDAPGNYWYVWFDAPIGYMAASKEWCDREGEAFDDWWRSEETEIVHVIGKDIVYFHTLFWPAMLKSARFSLPSRVQVHGFLTVNGEKMSKSKGTFVLASTYLKHLDPAYLRYYYASKLSSKVDDIDLNLEELVNKVNAELVNKVVNLASRSSRFVAQTGLSAVYPEDGGLFASAAEEGDAIGAAYAAFDYARATRSIVALADRANEYVDRMQPWALAKQPEKKAELQAVCTVALNLFRQIVLYLAPVLPKLADDVARLLGCPMDRWALAKTPLVGTPVAAYEHLMKRVEPGAVEKMIAEGRPAEEAAAPGGAAGANAEAGQAAGGGAAAEDDGAALAKEPLAPECTIDDFSKVDLRVARIVAAEHVPEAKKLLKLTVSLGGEARRTVFAGIKAYYKPEDLIGRLVIVCANLAPRKMKFGLSEGMVLAAGDETVHLLSPDSGAKPGMRVH</sequence>
<keyword id="KW-0030">Aminoacyl-tRNA synthetase</keyword>
<keyword id="KW-0067">ATP-binding</keyword>
<keyword id="KW-0963">Cytoplasm</keyword>
<keyword id="KW-0436">Ligase</keyword>
<keyword id="KW-0479">Metal-binding</keyword>
<keyword id="KW-0547">Nucleotide-binding</keyword>
<keyword id="KW-0648">Protein biosynthesis</keyword>
<keyword id="KW-1185">Reference proteome</keyword>
<keyword id="KW-0694">RNA-binding</keyword>
<keyword id="KW-0820">tRNA-binding</keyword>
<keyword id="KW-0862">Zinc</keyword>
<gene>
    <name evidence="1" type="primary">metG1</name>
    <name type="ordered locus">sce7883</name>
</gene>
<reference key="1">
    <citation type="journal article" date="2007" name="Nat. Biotechnol.">
        <title>Complete genome sequence of the myxobacterium Sorangium cellulosum.</title>
        <authorList>
            <person name="Schneiker S."/>
            <person name="Perlova O."/>
            <person name="Kaiser O."/>
            <person name="Gerth K."/>
            <person name="Alici A."/>
            <person name="Altmeyer M.O."/>
            <person name="Bartels D."/>
            <person name="Bekel T."/>
            <person name="Beyer S."/>
            <person name="Bode E."/>
            <person name="Bode H.B."/>
            <person name="Bolten C.J."/>
            <person name="Choudhuri J.V."/>
            <person name="Doss S."/>
            <person name="Elnakady Y.A."/>
            <person name="Frank B."/>
            <person name="Gaigalat L."/>
            <person name="Goesmann A."/>
            <person name="Groeger C."/>
            <person name="Gross F."/>
            <person name="Jelsbak L."/>
            <person name="Jelsbak L."/>
            <person name="Kalinowski J."/>
            <person name="Kegler C."/>
            <person name="Knauber T."/>
            <person name="Konietzny S."/>
            <person name="Kopp M."/>
            <person name="Krause L."/>
            <person name="Krug D."/>
            <person name="Linke B."/>
            <person name="Mahmud T."/>
            <person name="Martinez-Arias R."/>
            <person name="McHardy A.C."/>
            <person name="Merai M."/>
            <person name="Meyer F."/>
            <person name="Mormann S."/>
            <person name="Munoz-Dorado J."/>
            <person name="Perez J."/>
            <person name="Pradella S."/>
            <person name="Rachid S."/>
            <person name="Raddatz G."/>
            <person name="Rosenau F."/>
            <person name="Rueckert C."/>
            <person name="Sasse F."/>
            <person name="Scharfe M."/>
            <person name="Schuster S.C."/>
            <person name="Suen G."/>
            <person name="Treuner-Lange A."/>
            <person name="Velicer G.J."/>
            <person name="Vorholter F.-J."/>
            <person name="Weissman K.J."/>
            <person name="Welch R.D."/>
            <person name="Wenzel S.C."/>
            <person name="Whitworth D.E."/>
            <person name="Wilhelm S."/>
            <person name="Wittmann C."/>
            <person name="Bloecker H."/>
            <person name="Puehler A."/>
            <person name="Mueller R."/>
        </authorList>
    </citation>
    <scope>NUCLEOTIDE SEQUENCE [LARGE SCALE GENOMIC DNA]</scope>
    <source>
        <strain>So ce56</strain>
    </source>
</reference>